<name>KRT86_MOUSE</name>
<sequence>MTCGSYCGGRAFSCASACGPRPGRCCISAAPYRGISCYRGLSGGFGSQSVCGAFRSGSCGRSFGYRSGGICGPSPPCITTVSVNESLLTPLNLEIDPNAQCVKHEEKEQIKCLNSKFAAFIDKVRFLEQQNKLLETKWQFYQNRKCCESNMEPLFEGYIEALRREAECVEADSGRLAAELNHAQESMEGYKKRYEEEVSLRATAENEFVALKKDVDCAYLRKSDLEANAEALTQETDFLRRMYDEETRILHSHISDTSIVVKMDNSRDLNMDCVVAEIKAQYDDIASRSRAEAESWYRTKCEEIKATVIRHGETLRRTREEINELNRMIQRLTAEIENAKCQNTKLEAAVTQSEQQGEAALADARCKLAELEGALQKAKQDMACLLKEYQEVMNSKLGLDVEITTYRRLLEGEEQRLCEGVGSVNVCVSSSRGGVVCGDLCVSGTAPAVNTRVCSAPCSGNVVVGTPNACAPCAGAGACSGGCKKC</sequence>
<feature type="chain" id="PRO_0000063705" description="Keratin, type II cuticular Hb6">
    <location>
        <begin position="1"/>
        <end position="486"/>
    </location>
</feature>
<feature type="domain" description="IF rod" evidence="2">
    <location>
        <begin position="106"/>
        <end position="417"/>
    </location>
</feature>
<feature type="region of interest" description="Head">
    <location>
        <begin position="1"/>
        <end position="106"/>
    </location>
</feature>
<feature type="region of interest" description="Coil 1A">
    <location>
        <begin position="107"/>
        <end position="141"/>
    </location>
</feature>
<feature type="region of interest" description="Linker 1">
    <location>
        <begin position="142"/>
        <end position="151"/>
    </location>
</feature>
<feature type="region of interest" description="Coil 1B">
    <location>
        <begin position="152"/>
        <end position="252"/>
    </location>
</feature>
<feature type="region of interest" description="Linker 12">
    <location>
        <begin position="253"/>
        <end position="269"/>
    </location>
</feature>
<feature type="region of interest" description="Coil 2">
    <location>
        <begin position="270"/>
        <end position="413"/>
    </location>
</feature>
<feature type="region of interest" description="Tail">
    <location>
        <begin position="414"/>
        <end position="486"/>
    </location>
</feature>
<feature type="cross-link" description="Glycyl lysine isopeptide (Lys-Gly) (interchain with G-Cter in SUMO1)" evidence="1">
    <location>
        <position position="212"/>
    </location>
</feature>
<comment type="subunit">
    <text>Heterotetramer of two type I and two type II keratins.</text>
</comment>
<comment type="miscellaneous">
    <text>There are two types of hair/microfibrillar keratin, I (acidic) and II (neutral to basic).</text>
</comment>
<comment type="similarity">
    <text evidence="2">Belongs to the intermediate filament family.</text>
</comment>
<reference key="1">
    <citation type="journal article" date="2005" name="Science">
        <title>The transcriptional landscape of the mammalian genome.</title>
        <authorList>
            <person name="Carninci P."/>
            <person name="Kasukawa T."/>
            <person name="Katayama S."/>
            <person name="Gough J."/>
            <person name="Frith M.C."/>
            <person name="Maeda N."/>
            <person name="Oyama R."/>
            <person name="Ravasi T."/>
            <person name="Lenhard B."/>
            <person name="Wells C."/>
            <person name="Kodzius R."/>
            <person name="Shimokawa K."/>
            <person name="Bajic V.B."/>
            <person name="Brenner S.E."/>
            <person name="Batalov S."/>
            <person name="Forrest A.R."/>
            <person name="Zavolan M."/>
            <person name="Davis M.J."/>
            <person name="Wilming L.G."/>
            <person name="Aidinis V."/>
            <person name="Allen J.E."/>
            <person name="Ambesi-Impiombato A."/>
            <person name="Apweiler R."/>
            <person name="Aturaliya R.N."/>
            <person name="Bailey T.L."/>
            <person name="Bansal M."/>
            <person name="Baxter L."/>
            <person name="Beisel K.W."/>
            <person name="Bersano T."/>
            <person name="Bono H."/>
            <person name="Chalk A.M."/>
            <person name="Chiu K.P."/>
            <person name="Choudhary V."/>
            <person name="Christoffels A."/>
            <person name="Clutterbuck D.R."/>
            <person name="Crowe M.L."/>
            <person name="Dalla E."/>
            <person name="Dalrymple B.P."/>
            <person name="de Bono B."/>
            <person name="Della Gatta G."/>
            <person name="di Bernardo D."/>
            <person name="Down T."/>
            <person name="Engstrom P."/>
            <person name="Fagiolini M."/>
            <person name="Faulkner G."/>
            <person name="Fletcher C.F."/>
            <person name="Fukushima T."/>
            <person name="Furuno M."/>
            <person name="Futaki S."/>
            <person name="Gariboldi M."/>
            <person name="Georgii-Hemming P."/>
            <person name="Gingeras T.R."/>
            <person name="Gojobori T."/>
            <person name="Green R.E."/>
            <person name="Gustincich S."/>
            <person name="Harbers M."/>
            <person name="Hayashi Y."/>
            <person name="Hensch T.K."/>
            <person name="Hirokawa N."/>
            <person name="Hill D."/>
            <person name="Huminiecki L."/>
            <person name="Iacono M."/>
            <person name="Ikeo K."/>
            <person name="Iwama A."/>
            <person name="Ishikawa T."/>
            <person name="Jakt M."/>
            <person name="Kanapin A."/>
            <person name="Katoh M."/>
            <person name="Kawasawa Y."/>
            <person name="Kelso J."/>
            <person name="Kitamura H."/>
            <person name="Kitano H."/>
            <person name="Kollias G."/>
            <person name="Krishnan S.P."/>
            <person name="Kruger A."/>
            <person name="Kummerfeld S.K."/>
            <person name="Kurochkin I.V."/>
            <person name="Lareau L.F."/>
            <person name="Lazarevic D."/>
            <person name="Lipovich L."/>
            <person name="Liu J."/>
            <person name="Liuni S."/>
            <person name="McWilliam S."/>
            <person name="Madan Babu M."/>
            <person name="Madera M."/>
            <person name="Marchionni L."/>
            <person name="Matsuda H."/>
            <person name="Matsuzawa S."/>
            <person name="Miki H."/>
            <person name="Mignone F."/>
            <person name="Miyake S."/>
            <person name="Morris K."/>
            <person name="Mottagui-Tabar S."/>
            <person name="Mulder N."/>
            <person name="Nakano N."/>
            <person name="Nakauchi H."/>
            <person name="Ng P."/>
            <person name="Nilsson R."/>
            <person name="Nishiguchi S."/>
            <person name="Nishikawa S."/>
            <person name="Nori F."/>
            <person name="Ohara O."/>
            <person name="Okazaki Y."/>
            <person name="Orlando V."/>
            <person name="Pang K.C."/>
            <person name="Pavan W.J."/>
            <person name="Pavesi G."/>
            <person name="Pesole G."/>
            <person name="Petrovsky N."/>
            <person name="Piazza S."/>
            <person name="Reed J."/>
            <person name="Reid J.F."/>
            <person name="Ring B.Z."/>
            <person name="Ringwald M."/>
            <person name="Rost B."/>
            <person name="Ruan Y."/>
            <person name="Salzberg S.L."/>
            <person name="Sandelin A."/>
            <person name="Schneider C."/>
            <person name="Schoenbach C."/>
            <person name="Sekiguchi K."/>
            <person name="Semple C.A."/>
            <person name="Seno S."/>
            <person name="Sessa L."/>
            <person name="Sheng Y."/>
            <person name="Shibata Y."/>
            <person name="Shimada H."/>
            <person name="Shimada K."/>
            <person name="Silva D."/>
            <person name="Sinclair B."/>
            <person name="Sperling S."/>
            <person name="Stupka E."/>
            <person name="Sugiura K."/>
            <person name="Sultana R."/>
            <person name="Takenaka Y."/>
            <person name="Taki K."/>
            <person name="Tammoja K."/>
            <person name="Tan S.L."/>
            <person name="Tang S."/>
            <person name="Taylor M.S."/>
            <person name="Tegner J."/>
            <person name="Teichmann S.A."/>
            <person name="Ueda H.R."/>
            <person name="van Nimwegen E."/>
            <person name="Verardo R."/>
            <person name="Wei C.L."/>
            <person name="Yagi K."/>
            <person name="Yamanishi H."/>
            <person name="Zabarovsky E."/>
            <person name="Zhu S."/>
            <person name="Zimmer A."/>
            <person name="Hide W."/>
            <person name="Bult C."/>
            <person name="Grimmond S.M."/>
            <person name="Teasdale R.D."/>
            <person name="Liu E.T."/>
            <person name="Brusic V."/>
            <person name="Quackenbush J."/>
            <person name="Wahlestedt C."/>
            <person name="Mattick J.S."/>
            <person name="Hume D.A."/>
            <person name="Kai C."/>
            <person name="Sasaki D."/>
            <person name="Tomaru Y."/>
            <person name="Fukuda S."/>
            <person name="Kanamori-Katayama M."/>
            <person name="Suzuki M."/>
            <person name="Aoki J."/>
            <person name="Arakawa T."/>
            <person name="Iida J."/>
            <person name="Imamura K."/>
            <person name="Itoh M."/>
            <person name="Kato T."/>
            <person name="Kawaji H."/>
            <person name="Kawagashira N."/>
            <person name="Kawashima T."/>
            <person name="Kojima M."/>
            <person name="Kondo S."/>
            <person name="Konno H."/>
            <person name="Nakano K."/>
            <person name="Ninomiya N."/>
            <person name="Nishio T."/>
            <person name="Okada M."/>
            <person name="Plessy C."/>
            <person name="Shibata K."/>
            <person name="Shiraki T."/>
            <person name="Suzuki S."/>
            <person name="Tagami M."/>
            <person name="Waki K."/>
            <person name="Watahiki A."/>
            <person name="Okamura-Oho Y."/>
            <person name="Suzuki H."/>
            <person name="Kawai J."/>
            <person name="Hayashizaki Y."/>
        </authorList>
    </citation>
    <scope>NUCLEOTIDE SEQUENCE [LARGE SCALE MRNA]</scope>
    <source>
        <strain>C57BL/6J</strain>
        <tissue>Skin</tissue>
    </source>
</reference>
<reference key="2">
    <citation type="journal article" date="1997" name="Differentiation">
        <title>Sequences and differential expression of three novel human type-II hair keratins.</title>
        <authorList>
            <person name="Rogers M.A."/>
            <person name="Langbein L."/>
            <person name="Praetzel S."/>
            <person name="Krieg T."/>
            <person name="Winter H."/>
            <person name="Schweizer J."/>
        </authorList>
    </citation>
    <scope>NUCLEOTIDE SEQUENCE [MRNA] OF 31-486</scope>
</reference>
<protein>
    <recommendedName>
        <fullName>Keratin, type II cuticular Hb6</fullName>
    </recommendedName>
    <alternativeName>
        <fullName>Keratin-86</fullName>
        <shortName>K86</shortName>
    </alternativeName>
    <alternativeName>
        <fullName>Type II hair keratin Hb6</fullName>
    </alternativeName>
    <alternativeName>
        <fullName>Type-II keratin Kb26</fullName>
    </alternativeName>
</protein>
<gene>
    <name type="primary">Krt86</name>
    <name type="synonym">Krt2-10</name>
    <name type="synonym">Krthb6</name>
</gene>
<keyword id="KW-0175">Coiled coil</keyword>
<keyword id="KW-0403">Intermediate filament</keyword>
<keyword id="KW-1017">Isopeptide bond</keyword>
<keyword id="KW-0416">Keratin</keyword>
<keyword id="KW-1185">Reference proteome</keyword>
<keyword id="KW-0832">Ubl conjugation</keyword>
<evidence type="ECO:0000250" key="1">
    <source>
        <dbReference type="UniProtKB" id="P78386"/>
    </source>
</evidence>
<evidence type="ECO:0000255" key="2">
    <source>
        <dbReference type="PROSITE-ProRule" id="PRU01188"/>
    </source>
</evidence>
<accession>P97861</accession>
<accession>Q3TTV9</accession>
<organism>
    <name type="scientific">Mus musculus</name>
    <name type="common">Mouse</name>
    <dbReference type="NCBI Taxonomy" id="10090"/>
    <lineage>
        <taxon>Eukaryota</taxon>
        <taxon>Metazoa</taxon>
        <taxon>Chordata</taxon>
        <taxon>Craniata</taxon>
        <taxon>Vertebrata</taxon>
        <taxon>Euteleostomi</taxon>
        <taxon>Mammalia</taxon>
        <taxon>Eutheria</taxon>
        <taxon>Euarchontoglires</taxon>
        <taxon>Glires</taxon>
        <taxon>Rodentia</taxon>
        <taxon>Myomorpha</taxon>
        <taxon>Muroidea</taxon>
        <taxon>Muridae</taxon>
        <taxon>Murinae</taxon>
        <taxon>Mus</taxon>
        <taxon>Mus</taxon>
    </lineage>
</organism>
<dbReference type="EMBL" id="AK161149">
    <property type="protein sequence ID" value="BAE36215.1"/>
    <property type="molecule type" value="mRNA"/>
</dbReference>
<dbReference type="EMBL" id="X99143">
    <property type="protein sequence ID" value="CAA67580.1"/>
    <property type="molecule type" value="mRNA"/>
</dbReference>
<dbReference type="CCDS" id="CCDS37218.1"/>
<dbReference type="RefSeq" id="NP_034797.1">
    <property type="nucleotide sequence ID" value="NM_010667.2"/>
</dbReference>
<dbReference type="SMR" id="P97861"/>
<dbReference type="BioGRID" id="201031">
    <property type="interactions" value="3"/>
</dbReference>
<dbReference type="ComplexPortal" id="CPX-5870">
    <property type="entry name" value="Keratin-36 - Keratin-86 dimer complex"/>
</dbReference>
<dbReference type="FunCoup" id="P97861">
    <property type="interactions" value="32"/>
</dbReference>
<dbReference type="STRING" id="10090.ENSMUSP00000085365"/>
<dbReference type="iPTMnet" id="P97861"/>
<dbReference type="PhosphoSitePlus" id="P97861"/>
<dbReference type="jPOST" id="P97861"/>
<dbReference type="PaxDb" id="10090-ENSMUSP00000085365"/>
<dbReference type="ProteomicsDB" id="264873"/>
<dbReference type="DNASU" id="16679"/>
<dbReference type="Ensembl" id="ENSMUST00000088049.5">
    <property type="protein sequence ID" value="ENSMUSP00000085365.4"/>
    <property type="gene ID" value="ENSMUSG00000067614.6"/>
</dbReference>
<dbReference type="GeneID" id="16679"/>
<dbReference type="KEGG" id="mmu:16679"/>
<dbReference type="UCSC" id="uc007xti.1">
    <property type="organism name" value="mouse"/>
</dbReference>
<dbReference type="AGR" id="MGI:109362"/>
<dbReference type="CTD" id="3892"/>
<dbReference type="MGI" id="MGI:109362">
    <property type="gene designation" value="Krt86"/>
</dbReference>
<dbReference type="VEuPathDB" id="HostDB:ENSMUSG00000067614"/>
<dbReference type="eggNOG" id="ENOG502RTZU">
    <property type="taxonomic scope" value="Eukaryota"/>
</dbReference>
<dbReference type="GeneTree" id="ENSGT00940000154026"/>
<dbReference type="HOGENOM" id="CLU_012560_5_0_1"/>
<dbReference type="InParanoid" id="P97861"/>
<dbReference type="OMA" id="RSCATNT"/>
<dbReference type="OrthoDB" id="2441647at2759"/>
<dbReference type="PhylomeDB" id="P97861"/>
<dbReference type="TreeFam" id="TF317854"/>
<dbReference type="Reactome" id="R-MMU-6805567">
    <property type="pathway name" value="Keratinization"/>
</dbReference>
<dbReference type="Reactome" id="R-MMU-6809371">
    <property type="pathway name" value="Formation of the cornified envelope"/>
</dbReference>
<dbReference type="BioGRID-ORCS" id="16679">
    <property type="hits" value="0 hits in 77 CRISPR screens"/>
</dbReference>
<dbReference type="ChiTaRS" id="Krt1">
    <property type="organism name" value="mouse"/>
</dbReference>
<dbReference type="PRO" id="PR:P97861"/>
<dbReference type="Proteomes" id="UP000000589">
    <property type="component" value="Chromosome 15"/>
</dbReference>
<dbReference type="RNAct" id="P97861">
    <property type="molecule type" value="protein"/>
</dbReference>
<dbReference type="Bgee" id="ENSMUSG00000067614">
    <property type="expression patterns" value="Expressed in lip and 20 other cell types or tissues"/>
</dbReference>
<dbReference type="ExpressionAtlas" id="P97861">
    <property type="expression patterns" value="baseline and differential"/>
</dbReference>
<dbReference type="GO" id="GO:0045095">
    <property type="term" value="C:keratin filament"/>
    <property type="evidence" value="ECO:0000266"/>
    <property type="project" value="ComplexPortal"/>
</dbReference>
<dbReference type="FunFam" id="1.20.5.1160:FF:000001">
    <property type="entry name" value="Keratin type II"/>
    <property type="match status" value="1"/>
</dbReference>
<dbReference type="FunFam" id="1.20.5.170:FF:000004">
    <property type="entry name" value="Keratin, type II cytoskeletal 5"/>
    <property type="match status" value="1"/>
</dbReference>
<dbReference type="FunFam" id="1.20.5.500:FF:000001">
    <property type="entry name" value="Type II keratin 23"/>
    <property type="match status" value="1"/>
</dbReference>
<dbReference type="Gene3D" id="1.20.5.170">
    <property type="match status" value="1"/>
</dbReference>
<dbReference type="Gene3D" id="1.20.5.500">
    <property type="entry name" value="Single helix bin"/>
    <property type="match status" value="1"/>
</dbReference>
<dbReference type="Gene3D" id="1.20.5.1160">
    <property type="entry name" value="Vasodilator-stimulated phosphoprotein"/>
    <property type="match status" value="1"/>
</dbReference>
<dbReference type="InterPro" id="IPR009030">
    <property type="entry name" value="Growth_fac_rcpt_cys_sf"/>
</dbReference>
<dbReference type="InterPro" id="IPR018039">
    <property type="entry name" value="IF_conserved"/>
</dbReference>
<dbReference type="InterPro" id="IPR039008">
    <property type="entry name" value="IF_rod_dom"/>
</dbReference>
<dbReference type="InterPro" id="IPR032444">
    <property type="entry name" value="Keratin_2_head"/>
</dbReference>
<dbReference type="InterPro" id="IPR003054">
    <property type="entry name" value="Keratin_II"/>
</dbReference>
<dbReference type="PANTHER" id="PTHR45616">
    <property type="entry name" value="GATA-TYPE DOMAIN-CONTAINING PROTEIN"/>
    <property type="match status" value="1"/>
</dbReference>
<dbReference type="PANTHER" id="PTHR45616:SF52">
    <property type="entry name" value="KERATIN, TYPE II CUTICULAR HB3"/>
    <property type="match status" value="1"/>
</dbReference>
<dbReference type="Pfam" id="PF00038">
    <property type="entry name" value="Filament"/>
    <property type="match status" value="1"/>
</dbReference>
<dbReference type="Pfam" id="PF16208">
    <property type="entry name" value="Keratin_2_head"/>
    <property type="match status" value="1"/>
</dbReference>
<dbReference type="PRINTS" id="PR01276">
    <property type="entry name" value="TYPE2KERATIN"/>
</dbReference>
<dbReference type="SMART" id="SM01391">
    <property type="entry name" value="Filament"/>
    <property type="match status" value="1"/>
</dbReference>
<dbReference type="SUPFAM" id="SSF57184">
    <property type="entry name" value="Growth factor receptor domain"/>
    <property type="match status" value="1"/>
</dbReference>
<dbReference type="SUPFAM" id="SSF64593">
    <property type="entry name" value="Intermediate filament protein, coiled coil region"/>
    <property type="match status" value="2"/>
</dbReference>
<dbReference type="PROSITE" id="PS00226">
    <property type="entry name" value="IF_ROD_1"/>
    <property type="match status" value="1"/>
</dbReference>
<dbReference type="PROSITE" id="PS51842">
    <property type="entry name" value="IF_ROD_2"/>
    <property type="match status" value="1"/>
</dbReference>
<proteinExistence type="evidence at transcript level"/>